<sequence>MAKLDDATLAQLFTEARSHNGWNPEPLPESVLRELYALTKFGPTAANGSPARFYFVTSAEAKERLAKLSSGSNGPKIMQAPCTVIIGYDLDFPQTLPKLFPHAPGAKDWFNDPVAKEWCALRNSSLQGGYFMIGARALGLDVGPMSGFDNAAVDAEFFAGTNIKSNFIVSIGHGTDEGLFPRNPRLDFDEAAKIL</sequence>
<organism>
    <name type="scientific">Caulobacter vibrioides (strain NA1000 / CB15N)</name>
    <name type="common">Caulobacter crescentus</name>
    <dbReference type="NCBI Taxonomy" id="565050"/>
    <lineage>
        <taxon>Bacteria</taxon>
        <taxon>Pseudomonadati</taxon>
        <taxon>Pseudomonadota</taxon>
        <taxon>Alphaproteobacteria</taxon>
        <taxon>Caulobacterales</taxon>
        <taxon>Caulobacteraceae</taxon>
        <taxon>Caulobacter</taxon>
    </lineage>
</organism>
<keyword id="KW-0285">Flavoprotein</keyword>
<keyword id="KW-0288">FMN</keyword>
<keyword id="KW-0520">NAD</keyword>
<keyword id="KW-0521">NADP</keyword>
<keyword id="KW-0560">Oxidoreductase</keyword>
<keyword id="KW-1185">Reference proteome</keyword>
<reference key="1">
    <citation type="journal article" date="2010" name="J. Bacteriol.">
        <title>The genetic basis of laboratory adaptation in Caulobacter crescentus.</title>
        <authorList>
            <person name="Marks M.E."/>
            <person name="Castro-Rojas C.M."/>
            <person name="Teiling C."/>
            <person name="Du L."/>
            <person name="Kapatral V."/>
            <person name="Walunas T.L."/>
            <person name="Crosson S."/>
        </authorList>
    </citation>
    <scope>NUCLEOTIDE SEQUENCE [LARGE SCALE GENOMIC DNA]</scope>
    <source>
        <strain>NA1000 / CB15N</strain>
    </source>
</reference>
<gene>
    <name type="ordered locus">CCNA_00059</name>
</gene>
<feature type="chain" id="PRO_1000164649" description="Putative NADH dehydrogenase/NAD(P)H nitroreductase CCNA_00059">
    <location>
        <begin position="1"/>
        <end position="195"/>
    </location>
</feature>
<comment type="cofactor">
    <cofactor evidence="1">
        <name>FMN</name>
        <dbReference type="ChEBI" id="CHEBI:58210"/>
    </cofactor>
</comment>
<comment type="similarity">
    <text evidence="1">Belongs to the nitroreductase family. HadB/RutE subfamily.</text>
</comment>
<evidence type="ECO:0000255" key="1">
    <source>
        <dbReference type="HAMAP-Rule" id="MF_01204"/>
    </source>
</evidence>
<accession>B8GXF0</accession>
<name>Y059_CAUVN</name>
<protein>
    <recommendedName>
        <fullName evidence="1">Putative NADH dehydrogenase/NAD(P)H nitroreductase CCNA_00059</fullName>
        <ecNumber evidence="1">1.-.-.-</ecNumber>
    </recommendedName>
</protein>
<proteinExistence type="inferred from homology"/>
<dbReference type="EC" id="1.-.-.-" evidence="1"/>
<dbReference type="EMBL" id="CP001340">
    <property type="protein sequence ID" value="ACL93526.1"/>
    <property type="molecule type" value="Genomic_DNA"/>
</dbReference>
<dbReference type="RefSeq" id="WP_010917950.1">
    <property type="nucleotide sequence ID" value="NC_011916.1"/>
</dbReference>
<dbReference type="RefSeq" id="YP_002515434.1">
    <property type="nucleotide sequence ID" value="NC_011916.1"/>
</dbReference>
<dbReference type="SMR" id="B8GXF0"/>
<dbReference type="GeneID" id="7332149"/>
<dbReference type="KEGG" id="ccs:CCNA_00059"/>
<dbReference type="PATRIC" id="fig|565050.3.peg.59"/>
<dbReference type="HOGENOM" id="CLU_084441_0_0_5"/>
<dbReference type="OrthoDB" id="9784375at2"/>
<dbReference type="PhylomeDB" id="B8GXF0"/>
<dbReference type="Proteomes" id="UP000001364">
    <property type="component" value="Chromosome"/>
</dbReference>
<dbReference type="GO" id="GO:0016491">
    <property type="term" value="F:oxidoreductase activity"/>
    <property type="evidence" value="ECO:0007669"/>
    <property type="project" value="UniProtKB-UniRule"/>
</dbReference>
<dbReference type="CDD" id="cd02148">
    <property type="entry name" value="RutE-like"/>
    <property type="match status" value="1"/>
</dbReference>
<dbReference type="Gene3D" id="3.40.109.10">
    <property type="entry name" value="NADH Oxidase"/>
    <property type="match status" value="1"/>
</dbReference>
<dbReference type="HAMAP" id="MF_01204">
    <property type="entry name" value="Oxidoreductase_RutE_HadB"/>
    <property type="match status" value="1"/>
</dbReference>
<dbReference type="InterPro" id="IPR029479">
    <property type="entry name" value="Nitroreductase"/>
</dbReference>
<dbReference type="InterPro" id="IPR000415">
    <property type="entry name" value="Nitroreductase-like"/>
</dbReference>
<dbReference type="InterPro" id="IPR050461">
    <property type="entry name" value="Nitroreductase_HadB/RutE"/>
</dbReference>
<dbReference type="InterPro" id="IPR023936">
    <property type="entry name" value="RutE-like"/>
</dbReference>
<dbReference type="NCBIfam" id="NF003768">
    <property type="entry name" value="PRK05365.1"/>
    <property type="match status" value="1"/>
</dbReference>
<dbReference type="PANTHER" id="PTHR43543">
    <property type="entry name" value="MALONIC SEMIALDEHYDE REDUCTASE RUTE-RELATED"/>
    <property type="match status" value="1"/>
</dbReference>
<dbReference type="PANTHER" id="PTHR43543:SF1">
    <property type="entry name" value="MALONIC SEMIALDEHYDE REDUCTASE RUTE-RELATED"/>
    <property type="match status" value="1"/>
</dbReference>
<dbReference type="Pfam" id="PF00881">
    <property type="entry name" value="Nitroreductase"/>
    <property type="match status" value="1"/>
</dbReference>
<dbReference type="SUPFAM" id="SSF55469">
    <property type="entry name" value="FMN-dependent nitroreductase-like"/>
    <property type="match status" value="1"/>
</dbReference>